<protein>
    <recommendedName>
        <fullName evidence="1">Small ribosomal subunit protein uS11</fullName>
    </recommendedName>
    <alternativeName>
        <fullName evidence="2">30S ribosomal protein S11</fullName>
    </alternativeName>
</protein>
<sequence>MAKEATRVRRRERKNISSGVAHVNSTFNNTMITITDAQGNAIAWSSAGAQGFKGSRKSTPFAAQIAAEDCAKKAQEHGMRSLEVEVCGPGSGRESALRALQAAGFVITSIRDVTPIPHNGCRPRKKRRV</sequence>
<dbReference type="EMBL" id="CP000887">
    <property type="protein sequence ID" value="ACD72653.1"/>
    <property type="molecule type" value="Genomic_DNA"/>
</dbReference>
<dbReference type="RefSeq" id="WP_002964339.1">
    <property type="nucleotide sequence ID" value="NC_010742.1"/>
</dbReference>
<dbReference type="SMR" id="B2S656"/>
<dbReference type="GeneID" id="97533547"/>
<dbReference type="KEGG" id="bmc:BAbS19_I11480"/>
<dbReference type="HOGENOM" id="CLU_072439_5_0_5"/>
<dbReference type="Proteomes" id="UP000002565">
    <property type="component" value="Chromosome 1"/>
</dbReference>
<dbReference type="GO" id="GO:1990904">
    <property type="term" value="C:ribonucleoprotein complex"/>
    <property type="evidence" value="ECO:0007669"/>
    <property type="project" value="UniProtKB-KW"/>
</dbReference>
<dbReference type="GO" id="GO:0005840">
    <property type="term" value="C:ribosome"/>
    <property type="evidence" value="ECO:0007669"/>
    <property type="project" value="UniProtKB-KW"/>
</dbReference>
<dbReference type="GO" id="GO:0019843">
    <property type="term" value="F:rRNA binding"/>
    <property type="evidence" value="ECO:0007669"/>
    <property type="project" value="UniProtKB-UniRule"/>
</dbReference>
<dbReference type="GO" id="GO:0003735">
    <property type="term" value="F:structural constituent of ribosome"/>
    <property type="evidence" value="ECO:0007669"/>
    <property type="project" value="InterPro"/>
</dbReference>
<dbReference type="GO" id="GO:0006412">
    <property type="term" value="P:translation"/>
    <property type="evidence" value="ECO:0007669"/>
    <property type="project" value="UniProtKB-UniRule"/>
</dbReference>
<dbReference type="FunFam" id="3.30.420.80:FF:000001">
    <property type="entry name" value="30S ribosomal protein S11"/>
    <property type="match status" value="1"/>
</dbReference>
<dbReference type="Gene3D" id="3.30.420.80">
    <property type="entry name" value="Ribosomal protein S11"/>
    <property type="match status" value="1"/>
</dbReference>
<dbReference type="HAMAP" id="MF_01310">
    <property type="entry name" value="Ribosomal_uS11"/>
    <property type="match status" value="1"/>
</dbReference>
<dbReference type="InterPro" id="IPR001971">
    <property type="entry name" value="Ribosomal_uS11"/>
</dbReference>
<dbReference type="InterPro" id="IPR019981">
    <property type="entry name" value="Ribosomal_uS11_bac-type"/>
</dbReference>
<dbReference type="InterPro" id="IPR018102">
    <property type="entry name" value="Ribosomal_uS11_CS"/>
</dbReference>
<dbReference type="InterPro" id="IPR036967">
    <property type="entry name" value="Ribosomal_uS11_sf"/>
</dbReference>
<dbReference type="NCBIfam" id="NF003698">
    <property type="entry name" value="PRK05309.1"/>
    <property type="match status" value="1"/>
</dbReference>
<dbReference type="NCBIfam" id="TIGR03632">
    <property type="entry name" value="uS11_bact"/>
    <property type="match status" value="1"/>
</dbReference>
<dbReference type="PANTHER" id="PTHR11759">
    <property type="entry name" value="40S RIBOSOMAL PROTEIN S14/30S RIBOSOMAL PROTEIN S11"/>
    <property type="match status" value="1"/>
</dbReference>
<dbReference type="Pfam" id="PF00411">
    <property type="entry name" value="Ribosomal_S11"/>
    <property type="match status" value="1"/>
</dbReference>
<dbReference type="PIRSF" id="PIRSF002131">
    <property type="entry name" value="Ribosomal_S11"/>
    <property type="match status" value="1"/>
</dbReference>
<dbReference type="SUPFAM" id="SSF53137">
    <property type="entry name" value="Translational machinery components"/>
    <property type="match status" value="1"/>
</dbReference>
<dbReference type="PROSITE" id="PS00054">
    <property type="entry name" value="RIBOSOMAL_S11"/>
    <property type="match status" value="1"/>
</dbReference>
<feature type="chain" id="PRO_1000141060" description="Small ribosomal subunit protein uS11">
    <location>
        <begin position="1"/>
        <end position="129"/>
    </location>
</feature>
<reference key="1">
    <citation type="journal article" date="2008" name="PLoS ONE">
        <title>Genome sequence of Brucella abortus vaccine strain S19 compared to virulent strains yields candidate virulence genes.</title>
        <authorList>
            <person name="Crasta O.R."/>
            <person name="Folkerts O."/>
            <person name="Fei Z."/>
            <person name="Mane S.P."/>
            <person name="Evans C."/>
            <person name="Martino-Catt S."/>
            <person name="Bricker B."/>
            <person name="Yu G."/>
            <person name="Du L."/>
            <person name="Sobral B.W."/>
        </authorList>
    </citation>
    <scope>NUCLEOTIDE SEQUENCE [LARGE SCALE GENOMIC DNA]</scope>
    <source>
        <strain>S19</strain>
    </source>
</reference>
<gene>
    <name evidence="1" type="primary">rpsK</name>
    <name type="ordered locus">BAbS19_I11480</name>
</gene>
<comment type="function">
    <text evidence="1">Located on the platform of the 30S subunit, it bridges several disparate RNA helices of the 16S rRNA. Forms part of the Shine-Dalgarno cleft in the 70S ribosome.</text>
</comment>
<comment type="subunit">
    <text evidence="1">Part of the 30S ribosomal subunit. Interacts with proteins S7 and S18. Binds to IF-3.</text>
</comment>
<comment type="similarity">
    <text evidence="1">Belongs to the universal ribosomal protein uS11 family.</text>
</comment>
<organism>
    <name type="scientific">Brucella abortus (strain S19)</name>
    <dbReference type="NCBI Taxonomy" id="430066"/>
    <lineage>
        <taxon>Bacteria</taxon>
        <taxon>Pseudomonadati</taxon>
        <taxon>Pseudomonadota</taxon>
        <taxon>Alphaproteobacteria</taxon>
        <taxon>Hyphomicrobiales</taxon>
        <taxon>Brucellaceae</taxon>
        <taxon>Brucella/Ochrobactrum group</taxon>
        <taxon>Brucella</taxon>
    </lineage>
</organism>
<keyword id="KW-0687">Ribonucleoprotein</keyword>
<keyword id="KW-0689">Ribosomal protein</keyword>
<keyword id="KW-0694">RNA-binding</keyword>
<keyword id="KW-0699">rRNA-binding</keyword>
<proteinExistence type="inferred from homology"/>
<evidence type="ECO:0000255" key="1">
    <source>
        <dbReference type="HAMAP-Rule" id="MF_01310"/>
    </source>
</evidence>
<evidence type="ECO:0000305" key="2"/>
<name>RS11_BRUA1</name>
<accession>B2S656</accession>